<name>NUOA_BURVG</name>
<proteinExistence type="inferred from homology"/>
<organism>
    <name type="scientific">Burkholderia vietnamiensis (strain G4 / LMG 22486)</name>
    <name type="common">Burkholderia cepacia (strain R1808)</name>
    <dbReference type="NCBI Taxonomy" id="269482"/>
    <lineage>
        <taxon>Bacteria</taxon>
        <taxon>Pseudomonadati</taxon>
        <taxon>Pseudomonadota</taxon>
        <taxon>Betaproteobacteria</taxon>
        <taxon>Burkholderiales</taxon>
        <taxon>Burkholderiaceae</taxon>
        <taxon>Burkholderia</taxon>
        <taxon>Burkholderia cepacia complex</taxon>
    </lineage>
</organism>
<gene>
    <name evidence="1" type="primary">nuoA</name>
    <name type="ordered locus">Bcep1808_2334</name>
</gene>
<accession>A4JGD0</accession>
<reference key="1">
    <citation type="submission" date="2007-03" db="EMBL/GenBank/DDBJ databases">
        <title>Complete sequence of chromosome 1 of Burkholderia vietnamiensis G4.</title>
        <authorList>
            <consortium name="US DOE Joint Genome Institute"/>
            <person name="Copeland A."/>
            <person name="Lucas S."/>
            <person name="Lapidus A."/>
            <person name="Barry K."/>
            <person name="Detter J.C."/>
            <person name="Glavina del Rio T."/>
            <person name="Hammon N."/>
            <person name="Israni S."/>
            <person name="Dalin E."/>
            <person name="Tice H."/>
            <person name="Pitluck S."/>
            <person name="Chain P."/>
            <person name="Malfatti S."/>
            <person name="Shin M."/>
            <person name="Vergez L."/>
            <person name="Schmutz J."/>
            <person name="Larimer F."/>
            <person name="Land M."/>
            <person name="Hauser L."/>
            <person name="Kyrpides N."/>
            <person name="Tiedje J."/>
            <person name="Richardson P."/>
        </authorList>
    </citation>
    <scope>NUCLEOTIDE SEQUENCE [LARGE SCALE GENOMIC DNA]</scope>
    <source>
        <strain>G4 / LMG 22486</strain>
    </source>
</reference>
<dbReference type="EC" id="7.1.1.-" evidence="1"/>
<dbReference type="EMBL" id="CP000614">
    <property type="protein sequence ID" value="ABO55333.1"/>
    <property type="molecule type" value="Genomic_DNA"/>
</dbReference>
<dbReference type="SMR" id="A4JGD0"/>
<dbReference type="KEGG" id="bvi:Bcep1808_2334"/>
<dbReference type="eggNOG" id="COG0838">
    <property type="taxonomic scope" value="Bacteria"/>
</dbReference>
<dbReference type="HOGENOM" id="CLU_119549_3_1_4"/>
<dbReference type="Proteomes" id="UP000002287">
    <property type="component" value="Chromosome 1"/>
</dbReference>
<dbReference type="GO" id="GO:0030964">
    <property type="term" value="C:NADH dehydrogenase complex"/>
    <property type="evidence" value="ECO:0007669"/>
    <property type="project" value="TreeGrafter"/>
</dbReference>
<dbReference type="GO" id="GO:0005886">
    <property type="term" value="C:plasma membrane"/>
    <property type="evidence" value="ECO:0007669"/>
    <property type="project" value="UniProtKB-SubCell"/>
</dbReference>
<dbReference type="GO" id="GO:0008137">
    <property type="term" value="F:NADH dehydrogenase (ubiquinone) activity"/>
    <property type="evidence" value="ECO:0007669"/>
    <property type="project" value="InterPro"/>
</dbReference>
<dbReference type="GO" id="GO:0050136">
    <property type="term" value="F:NADH:ubiquinone reductase (non-electrogenic) activity"/>
    <property type="evidence" value="ECO:0007669"/>
    <property type="project" value="UniProtKB-UniRule"/>
</dbReference>
<dbReference type="GO" id="GO:0048038">
    <property type="term" value="F:quinone binding"/>
    <property type="evidence" value="ECO:0007669"/>
    <property type="project" value="UniProtKB-KW"/>
</dbReference>
<dbReference type="FunFam" id="1.20.58.1610:FF:000004">
    <property type="entry name" value="NADH-quinone oxidoreductase subunit A"/>
    <property type="match status" value="1"/>
</dbReference>
<dbReference type="Gene3D" id="1.20.58.1610">
    <property type="entry name" value="NADH:ubiquinone/plastoquinone oxidoreductase, chain 3"/>
    <property type="match status" value="1"/>
</dbReference>
<dbReference type="HAMAP" id="MF_01394">
    <property type="entry name" value="NDH1_NuoA"/>
    <property type="match status" value="1"/>
</dbReference>
<dbReference type="InterPro" id="IPR023043">
    <property type="entry name" value="NAD(P)H_OxRDtase_bac/plastid"/>
</dbReference>
<dbReference type="InterPro" id="IPR000440">
    <property type="entry name" value="NADH_UbQ/plastoQ_OxRdtase_su3"/>
</dbReference>
<dbReference type="InterPro" id="IPR038430">
    <property type="entry name" value="NDAH_ubi_oxred_su3_sf"/>
</dbReference>
<dbReference type="PANTHER" id="PTHR11058">
    <property type="entry name" value="NADH-UBIQUINONE OXIDOREDUCTASE CHAIN 3"/>
    <property type="match status" value="1"/>
</dbReference>
<dbReference type="PANTHER" id="PTHR11058:SF9">
    <property type="entry name" value="NADH-UBIQUINONE OXIDOREDUCTASE CHAIN 3"/>
    <property type="match status" value="1"/>
</dbReference>
<dbReference type="Pfam" id="PF00507">
    <property type="entry name" value="Oxidored_q4"/>
    <property type="match status" value="1"/>
</dbReference>
<keyword id="KW-0997">Cell inner membrane</keyword>
<keyword id="KW-1003">Cell membrane</keyword>
<keyword id="KW-0472">Membrane</keyword>
<keyword id="KW-0520">NAD</keyword>
<keyword id="KW-0874">Quinone</keyword>
<keyword id="KW-1278">Translocase</keyword>
<keyword id="KW-0812">Transmembrane</keyword>
<keyword id="KW-1133">Transmembrane helix</keyword>
<keyword id="KW-0813">Transport</keyword>
<keyword id="KW-0830">Ubiquinone</keyword>
<comment type="function">
    <text evidence="1">NDH-1 shuttles electrons from NADH, via FMN and iron-sulfur (Fe-S) centers, to quinones in the respiratory chain. The immediate electron acceptor for the enzyme in this species is believed to be ubiquinone. Couples the redox reaction to proton translocation (for every two electrons transferred, four hydrogen ions are translocated across the cytoplasmic membrane), and thus conserves the redox energy in a proton gradient.</text>
</comment>
<comment type="catalytic activity">
    <reaction evidence="1">
        <text>a quinone + NADH + 5 H(+)(in) = a quinol + NAD(+) + 4 H(+)(out)</text>
        <dbReference type="Rhea" id="RHEA:57888"/>
        <dbReference type="ChEBI" id="CHEBI:15378"/>
        <dbReference type="ChEBI" id="CHEBI:24646"/>
        <dbReference type="ChEBI" id="CHEBI:57540"/>
        <dbReference type="ChEBI" id="CHEBI:57945"/>
        <dbReference type="ChEBI" id="CHEBI:132124"/>
    </reaction>
</comment>
<comment type="subunit">
    <text evidence="1">NDH-1 is composed of 14 different subunits. Subunits NuoA, H, J, K, L, M, N constitute the membrane sector of the complex.</text>
</comment>
<comment type="subcellular location">
    <subcellularLocation>
        <location evidence="1">Cell inner membrane</location>
        <topology evidence="1">Multi-pass membrane protein</topology>
    </subcellularLocation>
</comment>
<comment type="similarity">
    <text evidence="1">Belongs to the complex I subunit 3 family.</text>
</comment>
<protein>
    <recommendedName>
        <fullName evidence="1">NADH-quinone oxidoreductase subunit A</fullName>
        <ecNumber evidence="1">7.1.1.-</ecNumber>
    </recommendedName>
    <alternativeName>
        <fullName evidence="1">NADH dehydrogenase I subunit A</fullName>
    </alternativeName>
    <alternativeName>
        <fullName evidence="1">NDH-1 subunit A</fullName>
    </alternativeName>
    <alternativeName>
        <fullName evidence="1">NUO1</fullName>
    </alternativeName>
</protein>
<sequence>MNLAAYYPVLLFLLVGTGLGIALVSIGKLLGPNKPDVDKNAPYECGFEAFEDARMKFDVRYYLVAILFIIFDLETAFLFPWGVALRDIGWPGFSAMMIFLLEFLLGFAYIWKKGGLDWE</sequence>
<feature type="chain" id="PRO_0000362651" description="NADH-quinone oxidoreductase subunit A">
    <location>
        <begin position="1"/>
        <end position="119"/>
    </location>
</feature>
<feature type="transmembrane region" description="Helical" evidence="1">
    <location>
        <begin position="7"/>
        <end position="27"/>
    </location>
</feature>
<feature type="transmembrane region" description="Helical" evidence="1">
    <location>
        <begin position="63"/>
        <end position="83"/>
    </location>
</feature>
<feature type="transmembrane region" description="Helical" evidence="1">
    <location>
        <begin position="88"/>
        <end position="108"/>
    </location>
</feature>
<evidence type="ECO:0000255" key="1">
    <source>
        <dbReference type="HAMAP-Rule" id="MF_01394"/>
    </source>
</evidence>